<comment type="function">
    <text>Essential subunit of the protein translocation channel SecYEG. Clamps together the 2 halves of SecY. May contact the channel plug during translocation.</text>
</comment>
<comment type="subunit">
    <text evidence="2">Component of the Sec protein translocase complex. Heterotrimer consisting of SecY, SecE and SecG subunits. The heterotrimers can form oligomers, although 1 heterotrimer is thought to be able to translocate proteins. Interacts with SecDF, and other proteins may be involved. The channel interacts with SecA via subunit SecY.</text>
</comment>
<comment type="subcellular location">
    <subcellularLocation>
        <location>Cell inner membrane</location>
        <topology>Single-pass membrane protein</topology>
    </subcellularLocation>
</comment>
<comment type="similarity">
    <text evidence="1">Belongs to the SecE/SEC61-gamma family.</text>
</comment>
<reference key="1">
    <citation type="journal article" date="1998" name="Nature">
        <title>The complete genome of the hyperthermophilic bacterium Aquifex aeolicus.</title>
        <authorList>
            <person name="Deckert G."/>
            <person name="Warren P.V."/>
            <person name="Gaasterland T."/>
            <person name="Young W.G."/>
            <person name="Lenox A.L."/>
            <person name="Graham D.E."/>
            <person name="Overbeek R."/>
            <person name="Snead M.A."/>
            <person name="Keller M."/>
            <person name="Aujay M."/>
            <person name="Huber R."/>
            <person name="Feldman R.A."/>
            <person name="Short J.M."/>
            <person name="Olsen G.J."/>
            <person name="Swanson R.V."/>
        </authorList>
    </citation>
    <scope>NUCLEOTIDE SEQUENCE [LARGE SCALE GENOMIC DNA]</scope>
    <source>
        <strain>VF5</strain>
    </source>
</reference>
<reference key="2">
    <citation type="journal article" date="2008" name="Nature">
        <title>Structure of a complex of the ATPase SecA and the protein-translocation channel.</title>
        <authorList>
            <person name="Zimmer J."/>
            <person name="Nam Y."/>
            <person name="Rapoport T.A."/>
        </authorList>
    </citation>
    <scope>X-RAY CRYSTALLOGRAPHY (7.5 ANGSTROMS) OF SECYEG IN COMPLEX WITH B.SUBTILIS SECA</scope>
</reference>
<protein>
    <recommendedName>
        <fullName evidence="1">Protein translocase subunit SecE</fullName>
    </recommendedName>
</protein>
<accession>D0VWU4</accession>
<keyword id="KW-0002">3D-structure</keyword>
<keyword id="KW-0997">Cell inner membrane</keyword>
<keyword id="KW-1003">Cell membrane</keyword>
<keyword id="KW-0472">Membrane</keyword>
<keyword id="KW-0653">Protein transport</keyword>
<keyword id="KW-1185">Reference proteome</keyword>
<keyword id="KW-0811">Translocation</keyword>
<keyword id="KW-0812">Transmembrane</keyword>
<keyword id="KW-1133">Transmembrane helix</keyword>
<keyword id="KW-0813">Transport</keyword>
<feature type="chain" id="PRO_0000414188" description="Protein translocase subunit SecE">
    <location>
        <begin position="1"/>
        <end position="65"/>
    </location>
</feature>
<feature type="topological domain" description="Cytoplasmic" evidence="3">
    <location>
        <begin position="1"/>
        <end position="27"/>
    </location>
</feature>
<feature type="transmembrane region" description="Helical">
    <location>
        <begin position="28"/>
        <end position="59"/>
    </location>
</feature>
<feature type="topological domain" description="Periplasmic" evidence="3">
    <location>
        <begin position="60"/>
        <end position="65"/>
    </location>
</feature>
<sequence length="65" mass="7494">MEKLKEFLKGVRDELKRVVWPSRELVVKATISVIIFSLAIGVYLWILDLTFTKIISFILSLRGSL</sequence>
<dbReference type="EMBL" id="AE000657">
    <property type="status" value="NOT_ANNOTATED_CDS"/>
    <property type="molecule type" value="Genomic_DNA"/>
</dbReference>
<dbReference type="RefSeq" id="NP_214325.1">
    <property type="nucleotide sequence ID" value="NC_000918.1"/>
</dbReference>
<dbReference type="RefSeq" id="WP_010881261.1">
    <property type="nucleotide sequence ID" value="NC_000918.1"/>
</dbReference>
<dbReference type="PDB" id="3DL8">
    <property type="method" value="X-ray"/>
    <property type="resolution" value="7.50 A"/>
    <property type="chains" value="C/D=1-65"/>
</dbReference>
<dbReference type="PDBsum" id="3DL8"/>
<dbReference type="SMR" id="D0VWU4"/>
<dbReference type="IntAct" id="D0VWU4">
    <property type="interactions" value="3"/>
</dbReference>
<dbReference type="KEGG" id="aae:aq_1930b"/>
<dbReference type="InParanoid" id="D0VWU4"/>
<dbReference type="OrthoDB" id="15365at2"/>
<dbReference type="EvolutionaryTrace" id="D0VWU4"/>
<dbReference type="Proteomes" id="UP000000798">
    <property type="component" value="Chromosome"/>
</dbReference>
<dbReference type="GO" id="GO:0005886">
    <property type="term" value="C:plasma membrane"/>
    <property type="evidence" value="ECO:0000318"/>
    <property type="project" value="GO_Central"/>
</dbReference>
<dbReference type="GO" id="GO:0008320">
    <property type="term" value="F:protein transmembrane transporter activity"/>
    <property type="evidence" value="ECO:0000318"/>
    <property type="project" value="GO_Central"/>
</dbReference>
<dbReference type="GO" id="GO:0065002">
    <property type="term" value="P:intracellular protein transmembrane transport"/>
    <property type="evidence" value="ECO:0007669"/>
    <property type="project" value="UniProtKB-UniRule"/>
</dbReference>
<dbReference type="GO" id="GO:0009306">
    <property type="term" value="P:protein secretion"/>
    <property type="evidence" value="ECO:0007669"/>
    <property type="project" value="UniProtKB-UniRule"/>
</dbReference>
<dbReference type="GO" id="GO:0006605">
    <property type="term" value="P:protein targeting"/>
    <property type="evidence" value="ECO:0007669"/>
    <property type="project" value="UniProtKB-UniRule"/>
</dbReference>
<dbReference type="GO" id="GO:0043952">
    <property type="term" value="P:protein transport by the Sec complex"/>
    <property type="evidence" value="ECO:0000318"/>
    <property type="project" value="GO_Central"/>
</dbReference>
<dbReference type="Gene3D" id="1.20.5.1030">
    <property type="entry name" value="Preprotein translocase secy subunit"/>
    <property type="match status" value="1"/>
</dbReference>
<dbReference type="HAMAP" id="MF_00422">
    <property type="entry name" value="SecE"/>
    <property type="match status" value="1"/>
</dbReference>
<dbReference type="InterPro" id="IPR005807">
    <property type="entry name" value="SecE_bac"/>
</dbReference>
<dbReference type="InterPro" id="IPR038379">
    <property type="entry name" value="SecE_sf"/>
</dbReference>
<dbReference type="InterPro" id="IPR001901">
    <property type="entry name" value="Translocase_SecE/Sec61-g"/>
</dbReference>
<dbReference type="NCBIfam" id="TIGR00964">
    <property type="entry name" value="secE_bact"/>
    <property type="match status" value="1"/>
</dbReference>
<dbReference type="PANTHER" id="PTHR33910">
    <property type="entry name" value="PROTEIN TRANSLOCASE SUBUNIT SECE"/>
    <property type="match status" value="1"/>
</dbReference>
<dbReference type="PANTHER" id="PTHR33910:SF1">
    <property type="entry name" value="PROTEIN TRANSLOCASE SUBUNIT SECE"/>
    <property type="match status" value="1"/>
</dbReference>
<dbReference type="Pfam" id="PF00584">
    <property type="entry name" value="SecE"/>
    <property type="match status" value="1"/>
</dbReference>
<dbReference type="PRINTS" id="PR01650">
    <property type="entry name" value="SECETRNLCASE"/>
</dbReference>
<gene>
    <name evidence="1" type="primary">secE</name>
    <name type="ordered locus">aq_1930</name>
</gene>
<evidence type="ECO:0000255" key="1">
    <source>
        <dbReference type="HAMAP-Rule" id="MF_00422"/>
    </source>
</evidence>
<evidence type="ECO:0000269" key="2">
    <source>
    </source>
</evidence>
<evidence type="ECO:0000305" key="3"/>
<name>SECE_AQUAE</name>
<organism>
    <name type="scientific">Aquifex aeolicus (strain VF5)</name>
    <dbReference type="NCBI Taxonomy" id="224324"/>
    <lineage>
        <taxon>Bacteria</taxon>
        <taxon>Pseudomonadati</taxon>
        <taxon>Aquificota</taxon>
        <taxon>Aquificia</taxon>
        <taxon>Aquificales</taxon>
        <taxon>Aquificaceae</taxon>
        <taxon>Aquifex</taxon>
    </lineage>
</organism>
<proteinExistence type="evidence at protein level"/>